<organism>
    <name type="scientific">Escherichia coli O6:H1 (strain CFT073 / ATCC 700928 / UPEC)</name>
    <dbReference type="NCBI Taxonomy" id="199310"/>
    <lineage>
        <taxon>Bacteria</taxon>
        <taxon>Pseudomonadati</taxon>
        <taxon>Pseudomonadota</taxon>
        <taxon>Gammaproteobacteria</taxon>
        <taxon>Enterobacterales</taxon>
        <taxon>Enterobacteriaceae</taxon>
        <taxon>Escherichia</taxon>
    </lineage>
</organism>
<sequence length="70" mass="7781">MSNKMTGLVKWFNADKGFGFITPDDGSKDVFVHFTAIQSNEFRTLNENQKVEFSIEQGQRGPAAANVVTL</sequence>
<protein>
    <recommendedName>
        <fullName>Cold shock-like protein CspG</fullName>
        <shortName>CPS-G</shortName>
    </recommendedName>
</protein>
<keyword id="KW-0010">Activator</keyword>
<keyword id="KW-0963">Cytoplasm</keyword>
<keyword id="KW-0238">DNA-binding</keyword>
<keyword id="KW-1185">Reference proteome</keyword>
<keyword id="KW-0804">Transcription</keyword>
<keyword id="KW-0805">Transcription regulation</keyword>
<feature type="chain" id="PRO_0000100264" description="Cold shock-like protein CspG">
    <location>
        <begin position="1"/>
        <end position="70"/>
    </location>
</feature>
<feature type="domain" description="CSD">
    <location>
        <begin position="7"/>
        <end position="67"/>
    </location>
</feature>
<reference key="1">
    <citation type="journal article" date="2002" name="Proc. Natl. Acad. Sci. U.S.A.">
        <title>Extensive mosaic structure revealed by the complete genome sequence of uropathogenic Escherichia coli.</title>
        <authorList>
            <person name="Welch R.A."/>
            <person name="Burland V."/>
            <person name="Plunkett G. III"/>
            <person name="Redford P."/>
            <person name="Roesch P."/>
            <person name="Rasko D."/>
            <person name="Buckles E.L."/>
            <person name="Liou S.-R."/>
            <person name="Boutin A."/>
            <person name="Hackett J."/>
            <person name="Stroud D."/>
            <person name="Mayhew G.F."/>
            <person name="Rose D.J."/>
            <person name="Zhou S."/>
            <person name="Schwartz D.C."/>
            <person name="Perna N.T."/>
            <person name="Mobley H.L.T."/>
            <person name="Donnenberg M.S."/>
            <person name="Blattner F.R."/>
        </authorList>
    </citation>
    <scope>NUCLEOTIDE SEQUENCE [LARGE SCALE GENOMIC DNA]</scope>
    <source>
        <strain>CFT073 / ATCC 700928 / UPEC</strain>
    </source>
</reference>
<proteinExistence type="inferred from homology"/>
<accession>P0A979</accession>
<accession>Q47130</accession>
<name>CSPG_ECOL6</name>
<comment type="subcellular location">
    <subcellularLocation>
        <location evidence="1">Cytoplasm</location>
    </subcellularLocation>
</comment>
<gene>
    <name type="primary">cspG</name>
    <name type="ordered locus">c1123</name>
</gene>
<dbReference type="EMBL" id="AE014075">
    <property type="protein sequence ID" value="AAN79591.1"/>
    <property type="molecule type" value="Genomic_DNA"/>
</dbReference>
<dbReference type="RefSeq" id="WP_000066490.1">
    <property type="nucleotide sequence ID" value="NZ_CP051263.1"/>
</dbReference>
<dbReference type="SMR" id="P0A979"/>
<dbReference type="STRING" id="199310.c1123"/>
<dbReference type="GeneID" id="93776422"/>
<dbReference type="KEGG" id="ecc:c1123"/>
<dbReference type="eggNOG" id="COG1278">
    <property type="taxonomic scope" value="Bacteria"/>
</dbReference>
<dbReference type="HOGENOM" id="CLU_117621_2_1_6"/>
<dbReference type="BioCyc" id="ECOL199310:C1123-MONOMER"/>
<dbReference type="Proteomes" id="UP000001410">
    <property type="component" value="Chromosome"/>
</dbReference>
<dbReference type="GO" id="GO:0005829">
    <property type="term" value="C:cytosol"/>
    <property type="evidence" value="ECO:0007669"/>
    <property type="project" value="UniProtKB-ARBA"/>
</dbReference>
<dbReference type="GO" id="GO:0003677">
    <property type="term" value="F:DNA binding"/>
    <property type="evidence" value="ECO:0007669"/>
    <property type="project" value="UniProtKB-KW"/>
</dbReference>
<dbReference type="CDD" id="cd04458">
    <property type="entry name" value="CSP_CDS"/>
    <property type="match status" value="1"/>
</dbReference>
<dbReference type="FunFam" id="2.40.50.140:FF:000006">
    <property type="entry name" value="Cold shock protein CspC"/>
    <property type="match status" value="1"/>
</dbReference>
<dbReference type="Gene3D" id="6.20.370.130">
    <property type="match status" value="1"/>
</dbReference>
<dbReference type="Gene3D" id="2.40.50.140">
    <property type="entry name" value="Nucleic acid-binding proteins"/>
    <property type="match status" value="1"/>
</dbReference>
<dbReference type="InterPro" id="IPR012156">
    <property type="entry name" value="Cold_shock_CspA"/>
</dbReference>
<dbReference type="InterPro" id="IPR050181">
    <property type="entry name" value="Cold_shock_domain"/>
</dbReference>
<dbReference type="InterPro" id="IPR011129">
    <property type="entry name" value="CSD"/>
</dbReference>
<dbReference type="InterPro" id="IPR019844">
    <property type="entry name" value="CSD_CS"/>
</dbReference>
<dbReference type="InterPro" id="IPR002059">
    <property type="entry name" value="CSP_DNA-bd"/>
</dbReference>
<dbReference type="InterPro" id="IPR012340">
    <property type="entry name" value="NA-bd_OB-fold"/>
</dbReference>
<dbReference type="NCBIfam" id="NF007378">
    <property type="entry name" value="PRK09890.1"/>
    <property type="match status" value="1"/>
</dbReference>
<dbReference type="NCBIfam" id="NF007679">
    <property type="entry name" value="PRK10354.1"/>
    <property type="match status" value="1"/>
</dbReference>
<dbReference type="PANTHER" id="PTHR11544">
    <property type="entry name" value="COLD SHOCK DOMAIN CONTAINING PROTEINS"/>
    <property type="match status" value="1"/>
</dbReference>
<dbReference type="Pfam" id="PF00313">
    <property type="entry name" value="CSD"/>
    <property type="match status" value="1"/>
</dbReference>
<dbReference type="PIRSF" id="PIRSF002599">
    <property type="entry name" value="Cold_shock_A"/>
    <property type="match status" value="1"/>
</dbReference>
<dbReference type="PRINTS" id="PR00050">
    <property type="entry name" value="COLDSHOCK"/>
</dbReference>
<dbReference type="SMART" id="SM00357">
    <property type="entry name" value="CSP"/>
    <property type="match status" value="1"/>
</dbReference>
<dbReference type="SUPFAM" id="SSF50249">
    <property type="entry name" value="Nucleic acid-binding proteins"/>
    <property type="match status" value="1"/>
</dbReference>
<dbReference type="PROSITE" id="PS00352">
    <property type="entry name" value="CSD_1"/>
    <property type="match status" value="1"/>
</dbReference>
<dbReference type="PROSITE" id="PS51857">
    <property type="entry name" value="CSD_2"/>
    <property type="match status" value="1"/>
</dbReference>
<evidence type="ECO:0000250" key="1"/>